<dbReference type="PIR" id="A37425">
    <property type="entry name" value="A37425"/>
</dbReference>
<dbReference type="PIR" id="S54336">
    <property type="entry name" value="S54336"/>
</dbReference>
<dbReference type="RefSeq" id="XP_017197722.1">
    <property type="nucleotide sequence ID" value="XM_017342233.3"/>
</dbReference>
<dbReference type="PDB" id="1MRB">
    <property type="method" value="NMR"/>
    <property type="chains" value="A=32-62"/>
</dbReference>
<dbReference type="PDB" id="2MRB">
    <property type="method" value="NMR"/>
    <property type="chains" value="A=1-31"/>
</dbReference>
<dbReference type="PDBsum" id="1MRB"/>
<dbReference type="PDBsum" id="2MRB"/>
<dbReference type="BMRB" id="P18055"/>
<dbReference type="SMR" id="P18055"/>
<dbReference type="STRING" id="9986.ENSOCUP00000047972"/>
<dbReference type="iPTMnet" id="P18055"/>
<dbReference type="PaxDb" id="9986-ENSOCUP00000018875"/>
<dbReference type="GeneID" id="100343299"/>
<dbReference type="KEGG" id="ocu:100343299"/>
<dbReference type="eggNOG" id="KOG4738">
    <property type="taxonomic scope" value="Eukaryota"/>
</dbReference>
<dbReference type="HOGENOM" id="CLU_171204_2_0_1"/>
<dbReference type="InParanoid" id="P18055"/>
<dbReference type="OMA" id="DSCTCAN"/>
<dbReference type="TreeFam" id="TF336054"/>
<dbReference type="EvolutionaryTrace" id="P18055"/>
<dbReference type="Proteomes" id="UP000001811">
    <property type="component" value="Unplaced"/>
</dbReference>
<dbReference type="ExpressionAtlas" id="P18055">
    <property type="expression patterns" value="baseline"/>
</dbReference>
<dbReference type="GO" id="GO:0005737">
    <property type="term" value="C:cytoplasm"/>
    <property type="evidence" value="ECO:0000250"/>
    <property type="project" value="UniProtKB"/>
</dbReference>
<dbReference type="GO" id="GO:0005634">
    <property type="term" value="C:nucleus"/>
    <property type="evidence" value="ECO:0000250"/>
    <property type="project" value="UniProtKB"/>
</dbReference>
<dbReference type="GO" id="GO:0008270">
    <property type="term" value="F:zinc ion binding"/>
    <property type="evidence" value="ECO:0000250"/>
    <property type="project" value="UniProtKB"/>
</dbReference>
<dbReference type="GO" id="GO:0071276">
    <property type="term" value="P:cellular response to cadmium ion"/>
    <property type="evidence" value="ECO:0007669"/>
    <property type="project" value="TreeGrafter"/>
</dbReference>
<dbReference type="GO" id="GO:0071280">
    <property type="term" value="P:cellular response to copper ion"/>
    <property type="evidence" value="ECO:0007669"/>
    <property type="project" value="TreeGrafter"/>
</dbReference>
<dbReference type="GO" id="GO:0071294">
    <property type="term" value="P:cellular response to zinc ion"/>
    <property type="evidence" value="ECO:0000250"/>
    <property type="project" value="UniProtKB"/>
</dbReference>
<dbReference type="GO" id="GO:0010273">
    <property type="term" value="P:detoxification of copper ion"/>
    <property type="evidence" value="ECO:0007669"/>
    <property type="project" value="TreeGrafter"/>
</dbReference>
<dbReference type="GO" id="GO:0006882">
    <property type="term" value="P:intracellular zinc ion homeostasis"/>
    <property type="evidence" value="ECO:0007669"/>
    <property type="project" value="TreeGrafter"/>
</dbReference>
<dbReference type="GO" id="GO:0045926">
    <property type="term" value="P:negative regulation of growth"/>
    <property type="evidence" value="ECO:0000250"/>
    <property type="project" value="UniProtKB"/>
</dbReference>
<dbReference type="FunFam" id="4.10.10.10:FF:000001">
    <property type="entry name" value="Metallothionein"/>
    <property type="match status" value="1"/>
</dbReference>
<dbReference type="Gene3D" id="4.10.10.10">
    <property type="entry name" value="Metallothionein Isoform II"/>
    <property type="match status" value="1"/>
</dbReference>
<dbReference type="InterPro" id="IPR017854">
    <property type="entry name" value="Metalthion_dom_sf"/>
</dbReference>
<dbReference type="InterPro" id="IPR023587">
    <property type="entry name" value="Metalthion_dom_sf_vert"/>
</dbReference>
<dbReference type="InterPro" id="IPR000006">
    <property type="entry name" value="Metalthion_vert"/>
</dbReference>
<dbReference type="InterPro" id="IPR018064">
    <property type="entry name" value="Metalthion_vert_metal_BS"/>
</dbReference>
<dbReference type="PANTHER" id="PTHR23299">
    <property type="entry name" value="METALLOTHIONEIN"/>
    <property type="match status" value="1"/>
</dbReference>
<dbReference type="PANTHER" id="PTHR23299:SF22">
    <property type="entry name" value="METALLOTHIONEIN-1G"/>
    <property type="match status" value="1"/>
</dbReference>
<dbReference type="Pfam" id="PF00131">
    <property type="entry name" value="Metallothio"/>
    <property type="match status" value="1"/>
</dbReference>
<dbReference type="PRINTS" id="PR00860">
    <property type="entry name" value="MTVERTEBRATE"/>
</dbReference>
<dbReference type="SUPFAM" id="SSF57868">
    <property type="entry name" value="Metallothionein"/>
    <property type="match status" value="1"/>
</dbReference>
<dbReference type="PROSITE" id="PS00203">
    <property type="entry name" value="METALLOTHIONEIN_VRT"/>
    <property type="match status" value="1"/>
</dbReference>
<reference key="1">
    <citation type="journal article" date="1991" name="Methods Enzymol.">
        <title>Amino acid sequence determination.</title>
        <authorList>
            <person name="Hunziker P.E."/>
        </authorList>
    </citation>
    <scope>PROTEIN SEQUENCE</scope>
    <source>
        <strain>New Zealand white</strain>
        <tissue>Kidney</tissue>
        <tissue>Liver</tissue>
    </source>
</reference>
<reference key="2">
    <citation type="journal article" date="1995" name="Biochem. J.">
        <title>Primary structures of seven metallothioneins from rabbit tissue.</title>
        <authorList>
            <person name="Hunziker P.E."/>
            <person name="Kaur P."/>
            <person name="Wan M."/>
            <person name="Kaenzig A."/>
        </authorList>
    </citation>
    <scope>PROTEIN SEQUENCE</scope>
    <scope>ACETYLATION AT MET-1</scope>
    <source>
        <strain>New Zealand white</strain>
        <tissue>Kidney</tissue>
        <tissue>Liver</tissue>
    </source>
</reference>
<reference key="3">
    <citation type="journal article" date="1986" name="Eur. J. Biochem.">
        <title>Sequence-specific 1H-NMR assignments in rabbit-liver metallothionein-2.</title>
        <authorList>
            <person name="Wagner G."/>
            <person name="Neuhaus D."/>
            <person name="Worgotter E."/>
            <person name="Vasak M."/>
            <person name="Kaegi J.H.R."/>
            <person name="Wuethrich K."/>
        </authorList>
    </citation>
    <scope>STRUCTURE BY NMR</scope>
    <scope>PROTEIN SEQUENCE</scope>
</reference>
<reference key="4">
    <citation type="journal article" date="1986" name="J. Mol. Biol.">
        <title>Nuclear magnetic resonance identification of 'half-turn' and 3(10)-helix secondary structure in rabbit liver metallothionein-2.</title>
        <authorList>
            <person name="Wagner G."/>
            <person name="Neuhaus D."/>
            <person name="Worgotter E."/>
            <person name="Vasak M."/>
            <person name="Kaegi J.H.R."/>
            <person name="Wuethrich K."/>
        </authorList>
    </citation>
    <scope>STRUCTURE BY NMR</scope>
</reference>
<reference evidence="5 6" key="5">
    <citation type="journal article" date="1988" name="J. Mol. Biol.">
        <title>Three-dimensional structure of rabbit liver [Cd7]metallothionein-2a in aqueous solution determined by nuclear magnetic resonance.</title>
        <authorList>
            <person name="Arseniev A."/>
            <person name="Schultze P."/>
            <person name="Worgotter E."/>
            <person name="Braun W."/>
            <person name="Wagner G."/>
            <person name="Vasak M."/>
            <person name="Kaegi J.H.R."/>
            <person name="Wuethrich K."/>
        </authorList>
    </citation>
    <scope>STRUCTURE BY NMR IN COMPLEX WITH CADMIUM IONS</scope>
    <scope>DOMAIN</scope>
</reference>
<name>MT2A_RABIT</name>
<organism>
    <name type="scientific">Oryctolagus cuniculus</name>
    <name type="common">Rabbit</name>
    <dbReference type="NCBI Taxonomy" id="9986"/>
    <lineage>
        <taxon>Eukaryota</taxon>
        <taxon>Metazoa</taxon>
        <taxon>Chordata</taxon>
        <taxon>Craniata</taxon>
        <taxon>Vertebrata</taxon>
        <taxon>Euteleostomi</taxon>
        <taxon>Mammalia</taxon>
        <taxon>Eutheria</taxon>
        <taxon>Euarchontoglires</taxon>
        <taxon>Glires</taxon>
        <taxon>Lagomorpha</taxon>
        <taxon>Leporidae</taxon>
        <taxon>Oryctolagus</taxon>
    </lineage>
</organism>
<keyword id="KW-0002">3D-structure</keyword>
<keyword id="KW-0007">Acetylation</keyword>
<keyword id="KW-0104">Cadmium</keyword>
<keyword id="KW-0186">Copper</keyword>
<keyword id="KW-0903">Direct protein sequencing</keyword>
<keyword id="KW-0479">Metal-binding</keyword>
<keyword id="KW-0480">Metal-thiolate cluster</keyword>
<keyword id="KW-0597">Phosphoprotein</keyword>
<keyword id="KW-1185">Reference proteome</keyword>
<keyword id="KW-0862">Zinc</keyword>
<comment type="function">
    <text>Metallothioneins have a high content of cysteine residues that bind various heavy metals; these proteins are transcriptionally regulated by both heavy metals and glucocorticoids.</text>
</comment>
<comment type="subunit">
    <text>Monomer.</text>
</comment>
<comment type="domain">
    <text evidence="2">Class I metallothioneins contain 2 metal-binding domains: four divalent ions are chelated within cluster A of the alpha domain and are coordinated via cysteinyl thiolate bridges to 11 cysteine ligands. Cluster B, the corresponding region within the beta domain, can ligate three divalent ions to 9 cysteines.</text>
</comment>
<comment type="similarity">
    <text evidence="4">Belongs to the metallothionein superfamily. Type 1 family.</text>
</comment>
<sequence length="62" mass="6083">MDPNCSCAAAGDSCTCANSCTCKACKCTSCKKSCCSCCPPGCAKCAQGCICKGASDKCSCCA</sequence>
<evidence type="ECO:0000250" key="1">
    <source>
        <dbReference type="UniProtKB" id="P02795"/>
    </source>
</evidence>
<evidence type="ECO:0000269" key="2">
    <source>
    </source>
</evidence>
<evidence type="ECO:0000269" key="3">
    <source>
    </source>
</evidence>
<evidence type="ECO:0000305" key="4"/>
<evidence type="ECO:0007744" key="5">
    <source>
        <dbReference type="PDB" id="1MRB"/>
    </source>
</evidence>
<evidence type="ECO:0007744" key="6">
    <source>
        <dbReference type="PDB" id="2MRB"/>
    </source>
</evidence>
<evidence type="ECO:0007829" key="7">
    <source>
        <dbReference type="PDB" id="1MRB"/>
    </source>
</evidence>
<evidence type="ECO:0007829" key="8">
    <source>
        <dbReference type="PDB" id="2MRB"/>
    </source>
</evidence>
<accession>P18055</accession>
<protein>
    <recommendedName>
        <fullName>Metallothionein-2A</fullName>
        <shortName>MT-2A</shortName>
    </recommendedName>
    <alternativeName>
        <fullName>Metallothionein-IIA</fullName>
        <shortName>MT-IIA</shortName>
    </alternativeName>
</protein>
<feature type="chain" id="PRO_0000197216" description="Metallothionein-2A">
    <location>
        <begin position="1"/>
        <end position="62"/>
    </location>
</feature>
<feature type="region of interest" description="Beta">
    <location>
        <begin position="1"/>
        <end position="30"/>
    </location>
</feature>
<feature type="region of interest" description="Alpha">
    <location>
        <begin position="31"/>
        <end position="62"/>
    </location>
</feature>
<feature type="binding site" evidence="2 6">
    <location>
        <position position="5"/>
    </location>
    <ligand>
        <name>a divalent metal cation</name>
        <dbReference type="ChEBI" id="CHEBI:60240"/>
        <label>1</label>
        <note>in cluster B</note>
    </ligand>
</feature>
<feature type="binding site" evidence="2 6">
    <location>
        <position position="7"/>
    </location>
    <ligand>
        <name>a divalent metal cation</name>
        <dbReference type="ChEBI" id="CHEBI:60240"/>
        <label>1</label>
        <note>in cluster B</note>
    </ligand>
</feature>
<feature type="binding site" evidence="2 6">
    <location>
        <position position="7"/>
    </location>
    <ligand>
        <name>a divalent metal cation</name>
        <dbReference type="ChEBI" id="CHEBI:60240"/>
        <label>2</label>
        <note>in cluster B</note>
    </ligand>
</feature>
<feature type="binding site" evidence="2 6">
    <location>
        <position position="14"/>
    </location>
    <ligand>
        <name>a divalent metal cation</name>
        <dbReference type="ChEBI" id="CHEBI:60240"/>
        <label>2</label>
        <note>in cluster B</note>
    </ligand>
</feature>
<feature type="binding site" evidence="2 6">
    <location>
        <position position="16"/>
    </location>
    <ligand>
        <name>a divalent metal cation</name>
        <dbReference type="ChEBI" id="CHEBI:60240"/>
        <label>2</label>
        <note>in cluster B</note>
    </ligand>
</feature>
<feature type="binding site" evidence="2 6">
    <location>
        <position position="16"/>
    </location>
    <ligand>
        <name>a divalent metal cation</name>
        <dbReference type="ChEBI" id="CHEBI:60240"/>
        <label>3</label>
        <note>in cluster B</note>
    </ligand>
</feature>
<feature type="binding site" evidence="2 6">
    <location>
        <position position="20"/>
    </location>
    <ligand>
        <name>a divalent metal cation</name>
        <dbReference type="ChEBI" id="CHEBI:60240"/>
        <label>3</label>
        <note>in cluster B</note>
    </ligand>
</feature>
<feature type="binding site" evidence="2 6">
    <location>
        <position position="22"/>
    </location>
    <ligand>
        <name>a divalent metal cation</name>
        <dbReference type="ChEBI" id="CHEBI:60240"/>
        <label>1</label>
        <note>in cluster B</note>
    </ligand>
</feature>
<feature type="binding site" evidence="2 6">
    <location>
        <position position="25"/>
    </location>
    <ligand>
        <name>a divalent metal cation</name>
        <dbReference type="ChEBI" id="CHEBI:60240"/>
        <label>1</label>
        <note>in cluster B</note>
    </ligand>
</feature>
<feature type="binding site" evidence="2 6">
    <location>
        <position position="25"/>
    </location>
    <ligand>
        <name>a divalent metal cation</name>
        <dbReference type="ChEBI" id="CHEBI:60240"/>
        <label>3</label>
        <note>in cluster B</note>
    </ligand>
</feature>
<feature type="binding site" evidence="2 6">
    <location>
        <position position="27"/>
    </location>
    <ligand>
        <name>a divalent metal cation</name>
        <dbReference type="ChEBI" id="CHEBI:60240"/>
        <label>2</label>
        <note>in cluster B</note>
    </ligand>
</feature>
<feature type="binding site" evidence="2 6">
    <location>
        <position position="30"/>
    </location>
    <ligand>
        <name>a divalent metal cation</name>
        <dbReference type="ChEBI" id="CHEBI:60240"/>
        <label>3</label>
        <note>in cluster B</note>
    </ligand>
</feature>
<feature type="binding site" evidence="2 5">
    <location>
        <position position="34"/>
    </location>
    <ligand>
        <name>a divalent metal cation</name>
        <dbReference type="ChEBI" id="CHEBI:60240"/>
        <label>4</label>
        <note>in cluster A</note>
    </ligand>
</feature>
<feature type="binding site" evidence="2 5">
    <location>
        <position position="35"/>
    </location>
    <ligand>
        <name>a divalent metal cation</name>
        <dbReference type="ChEBI" id="CHEBI:60240"/>
        <label>4</label>
        <note>in cluster A</note>
    </ligand>
</feature>
<feature type="binding site" evidence="2 5">
    <location>
        <position position="35"/>
    </location>
    <ligand>
        <name>a divalent metal cation</name>
        <dbReference type="ChEBI" id="CHEBI:60240"/>
        <label>5</label>
        <note>in cluster A</note>
    </ligand>
</feature>
<feature type="binding site" evidence="2 5">
    <location>
        <position position="37"/>
    </location>
    <ligand>
        <name>a divalent metal cation</name>
        <dbReference type="ChEBI" id="CHEBI:60240"/>
        <label>5</label>
        <note>in cluster A</note>
    </ligand>
</feature>
<feature type="binding site" evidence="2 5">
    <location>
        <position position="38"/>
    </location>
    <ligand>
        <name>a divalent metal cation</name>
        <dbReference type="ChEBI" id="CHEBI:60240"/>
        <label>5</label>
        <note>in cluster A</note>
    </ligand>
</feature>
<feature type="binding site" evidence="2 5">
    <location>
        <position position="38"/>
    </location>
    <ligand>
        <name>a divalent metal cation</name>
        <dbReference type="ChEBI" id="CHEBI:60240"/>
        <label>6</label>
        <note>in cluster A</note>
    </ligand>
</feature>
<feature type="binding site" evidence="2 5">
    <location>
        <position position="42"/>
    </location>
    <ligand>
        <name>a divalent metal cation</name>
        <dbReference type="ChEBI" id="CHEBI:60240"/>
        <label>6</label>
        <note>in cluster A</note>
    </ligand>
</feature>
<feature type="binding site" evidence="2 5">
    <location>
        <position position="45"/>
    </location>
    <ligand>
        <name>a divalent metal cation</name>
        <dbReference type="ChEBI" id="CHEBI:60240"/>
        <label>4</label>
        <note>in cluster A</note>
    </ligand>
</feature>
<feature type="binding site" evidence="2 5">
    <location>
        <position position="45"/>
    </location>
    <ligand>
        <name>a divalent metal cation</name>
        <dbReference type="ChEBI" id="CHEBI:60240"/>
        <label>6</label>
        <note>in cluster A</note>
    </ligand>
</feature>
<feature type="binding site" evidence="2 5">
    <location>
        <position position="49"/>
    </location>
    <ligand>
        <name>a divalent metal cation</name>
        <dbReference type="ChEBI" id="CHEBI:60240"/>
        <label>4</label>
        <note>in cluster A</note>
    </ligand>
</feature>
<feature type="binding site" evidence="2 5">
    <location>
        <position position="51"/>
    </location>
    <ligand>
        <name>a divalent metal cation</name>
        <dbReference type="ChEBI" id="CHEBI:60240"/>
        <label>5</label>
        <note>in cluster A</note>
    </ligand>
</feature>
<feature type="binding site" evidence="2 5">
    <location>
        <position position="51"/>
    </location>
    <ligand>
        <name>a divalent metal cation</name>
        <dbReference type="ChEBI" id="CHEBI:60240"/>
        <label>7</label>
        <note>in cluster A</note>
    </ligand>
</feature>
<feature type="binding site" evidence="2 5">
    <location>
        <position position="58"/>
    </location>
    <ligand>
        <name>a divalent metal cation</name>
        <dbReference type="ChEBI" id="CHEBI:60240"/>
        <label>7</label>
        <note>in cluster A</note>
    </ligand>
</feature>
<feature type="binding site" evidence="2 5">
    <location>
        <position position="60"/>
    </location>
    <ligand>
        <name>a divalent metal cation</name>
        <dbReference type="ChEBI" id="CHEBI:60240"/>
        <label>7</label>
        <note>in cluster A</note>
    </ligand>
</feature>
<feature type="binding site" evidence="2 5">
    <location>
        <position position="61"/>
    </location>
    <ligand>
        <name>a divalent metal cation</name>
        <dbReference type="ChEBI" id="CHEBI:60240"/>
        <label>6</label>
        <note>in cluster A</note>
    </ligand>
</feature>
<feature type="binding site" evidence="2 5">
    <location>
        <position position="61"/>
    </location>
    <ligand>
        <name>a divalent metal cation</name>
        <dbReference type="ChEBI" id="CHEBI:60240"/>
        <label>7</label>
        <note>in cluster A</note>
    </ligand>
</feature>
<feature type="modified residue" description="N-acetylmethionine" evidence="3">
    <location>
        <position position="1"/>
    </location>
</feature>
<feature type="modified residue" description="Phosphoserine" evidence="1">
    <location>
        <position position="59"/>
    </location>
</feature>
<feature type="strand" evidence="8">
    <location>
        <begin position="10"/>
        <end position="12"/>
    </location>
</feature>
<feature type="strand" evidence="7">
    <location>
        <begin position="36"/>
        <end position="38"/>
    </location>
</feature>
<feature type="strand" evidence="7">
    <location>
        <begin position="46"/>
        <end position="48"/>
    </location>
</feature>
<proteinExistence type="evidence at protein level"/>